<name>S39A6_PONAB</name>
<evidence type="ECO:0000250" key="1">
    <source>
        <dbReference type="UniProtKB" id="Q13433"/>
    </source>
</evidence>
<evidence type="ECO:0000250" key="2">
    <source>
        <dbReference type="UniProtKB" id="Q4V887"/>
    </source>
</evidence>
<evidence type="ECO:0000250" key="3">
    <source>
        <dbReference type="UniProtKB" id="Q8C145"/>
    </source>
</evidence>
<evidence type="ECO:0000255" key="4"/>
<evidence type="ECO:0000256" key="5">
    <source>
        <dbReference type="SAM" id="MobiDB-lite"/>
    </source>
</evidence>
<evidence type="ECO:0000305" key="6"/>
<keyword id="KW-1003">Cell membrane</keyword>
<keyword id="KW-0966">Cell projection</keyword>
<keyword id="KW-0175">Coiled coil</keyword>
<keyword id="KW-0325">Glycoprotein</keyword>
<keyword id="KW-0406">Ion transport</keyword>
<keyword id="KW-0472">Membrane</keyword>
<keyword id="KW-0597">Phosphoprotein</keyword>
<keyword id="KW-1185">Reference proteome</keyword>
<keyword id="KW-0732">Signal</keyword>
<keyword id="KW-0812">Transmembrane</keyword>
<keyword id="KW-1133">Transmembrane helix</keyword>
<keyword id="KW-0813">Transport</keyword>
<keyword id="KW-0862">Zinc</keyword>
<keyword id="KW-0864">Zinc transport</keyword>
<reference key="1">
    <citation type="submission" date="2004-11" db="EMBL/GenBank/DDBJ databases">
        <authorList>
            <consortium name="The German cDNA consortium"/>
        </authorList>
    </citation>
    <scope>NUCLEOTIDE SEQUENCE [LARGE SCALE MRNA]</scope>
    <source>
        <tissue>Kidney</tissue>
    </source>
</reference>
<accession>Q5R9M9</accession>
<proteinExistence type="evidence at transcript level"/>
<gene>
    <name evidence="1" type="primary">SLC39A6</name>
    <name type="synonym">ZIP6</name>
</gene>
<feature type="signal peptide" evidence="4">
    <location>
        <begin position="1"/>
        <end position="20"/>
    </location>
</feature>
<feature type="chain" id="PRO_0000041652" description="Zinc transporter ZIP6">
    <location>
        <begin position="21"/>
        <end position="743"/>
    </location>
</feature>
<feature type="topological domain" description="Extracellular" evidence="1">
    <location>
        <begin position="21"/>
        <end position="313"/>
    </location>
</feature>
<feature type="transmembrane region" description="Helical; Name=1" evidence="4">
    <location>
        <begin position="314"/>
        <end position="334"/>
    </location>
</feature>
<feature type="topological domain" description="Cytoplasmic" evidence="4">
    <location>
        <begin position="335"/>
        <end position="343"/>
    </location>
</feature>
<feature type="transmembrane region" description="Helical; Name=2" evidence="4">
    <location>
        <begin position="344"/>
        <end position="364"/>
    </location>
</feature>
<feature type="topological domain" description="Extracellular" evidence="4">
    <location>
        <begin position="365"/>
        <end position="411"/>
    </location>
</feature>
<feature type="transmembrane region" description="Helical; Name=3" evidence="4">
    <location>
        <begin position="412"/>
        <end position="432"/>
    </location>
</feature>
<feature type="topological domain" description="Cytoplasmic" evidence="4">
    <location>
        <begin position="433"/>
        <end position="645"/>
    </location>
</feature>
<feature type="transmembrane region" description="Helical; Name=4" evidence="4">
    <location>
        <begin position="646"/>
        <end position="666"/>
    </location>
</feature>
<feature type="topological domain" description="Extracellular" evidence="4">
    <location>
        <begin position="667"/>
        <end position="674"/>
    </location>
</feature>
<feature type="transmembrane region" description="Helical; Name=5" evidence="4">
    <location>
        <begin position="675"/>
        <end position="695"/>
    </location>
</feature>
<feature type="topological domain" description="Cytoplasmic" evidence="4">
    <location>
        <begin position="696"/>
        <end position="712"/>
    </location>
</feature>
<feature type="transmembrane region" description="Helical; Name=6" evidence="4">
    <location>
        <begin position="713"/>
        <end position="733"/>
    </location>
</feature>
<feature type="topological domain" description="Extracellular" evidence="1">
    <location>
        <begin position="734"/>
        <end position="743"/>
    </location>
</feature>
<feature type="region of interest" description="Disordered" evidence="5">
    <location>
        <begin position="96"/>
        <end position="174"/>
    </location>
</feature>
<feature type="region of interest" description="Disordered" evidence="5">
    <location>
        <begin position="190"/>
        <end position="245"/>
    </location>
</feature>
<feature type="coiled-coil region" evidence="4">
    <location>
        <begin position="452"/>
        <end position="474"/>
    </location>
</feature>
<feature type="compositionally biased region" description="Basic and acidic residues" evidence="5">
    <location>
        <begin position="96"/>
        <end position="116"/>
    </location>
</feature>
<feature type="compositionally biased region" description="Basic residues" evidence="5">
    <location>
        <begin position="117"/>
        <end position="132"/>
    </location>
</feature>
<feature type="compositionally biased region" description="Basic and acidic residues" evidence="5">
    <location>
        <begin position="133"/>
        <end position="147"/>
    </location>
</feature>
<feature type="compositionally biased region" description="Basic and acidic residues" evidence="5">
    <location>
        <begin position="155"/>
        <end position="167"/>
    </location>
</feature>
<feature type="compositionally biased region" description="Polar residues" evidence="5">
    <location>
        <begin position="206"/>
        <end position="215"/>
    </location>
</feature>
<feature type="compositionally biased region" description="Basic and acidic residues" evidence="5">
    <location>
        <begin position="227"/>
        <end position="237"/>
    </location>
</feature>
<feature type="modified residue" description="Phosphoserine" evidence="1">
    <location>
        <position position="459"/>
    </location>
</feature>
<feature type="modified residue" description="Phosphoserine" evidence="1">
    <location>
        <position position="466"/>
    </location>
</feature>
<feature type="glycosylation site" description="N-linked (GlcNAc...) asparagine" evidence="4">
    <location>
        <position position="67"/>
    </location>
</feature>
<feature type="glycosylation site" description="N-linked (GlcNAc...) asparagine" evidence="4">
    <location>
        <position position="229"/>
    </location>
</feature>
<feature type="glycosylation site" description="N-linked (GlcNAc...) asparagine" evidence="4">
    <location>
        <position position="254"/>
    </location>
</feature>
<feature type="glycosylation site" description="N-linked (GlcNAc...) asparagine" evidence="4">
    <location>
        <position position="271"/>
    </location>
</feature>
<feature type="glycosylation site" description="N-linked (GlcNAc...) asparagine" evidence="4">
    <location>
        <position position="672"/>
    </location>
</feature>
<sequence>MARKLSVILILTFALSVTNPLHELKAAAFPQTTEKISPNWESGINVDLAITTRQYHLQQLFYRYGENNSLSVEGFRKLLQNIGIDKIKRIHIHHDHEHHSDHEHHSDHEHHSDHEHHSHRNHAASGKNKRKALCPDHDSDSSGKDPRNSQGKGAHRSEHASGRRNVKDSVSASEVTSTVYNTVSEGTHFLETIETPRPGKLFPKDVSSSTPPSVTEKSRGSRLAGRKTNESVSEPRKGFMYSRNTNENPQECFNASKLLTSHGMGIQVPLNATEFNYLCPAIINQIDARSCLIHTSEKKAEIPPKTYSLQIAWVGGFIAISIISFLSLLGVILVPLMNRVFFKFLLSFLVALAVGTLSGDAFLHLLPHSHASHHHSHSHEEPAMEMKRGPLFSHLSSQNIEESAYFDSTWKGLTALGGLYFMFLVEHVLTLIKQFKDKKKKNQKKPENDDDVEIKKQLSKYESQLSTNEEKVDTDDRTEGYLRADSQEPSHFDSQQPAILEEEEVMIAHAHPQEVYNEYVPRGCKNKCHSHFHDTLGQSDDLIHHHHDYHHILHHHHHQNHHPHSHSQRYSREELKDAGIATLAWMVIMGDGLHNFSDGLAIGAAFTEGLSSGLSTSVAVFCHELPHELGDFAVLLKAGMTVKQAVLYNALSAMLAYLGMATGIFIGHYAENVSMWIFALTAGLFMYVALVDMVPEMLHNDASDHGCSRWGYFFLQNAGMLLGFGIMLLISIFEHKIVFRINF</sequence>
<dbReference type="EMBL" id="CR859357">
    <property type="protein sequence ID" value="CAH91531.1"/>
    <property type="molecule type" value="mRNA"/>
</dbReference>
<dbReference type="RefSeq" id="NP_001125899.1">
    <property type="nucleotide sequence ID" value="NM_001132427.1"/>
</dbReference>
<dbReference type="SMR" id="Q5R9M9"/>
<dbReference type="FunCoup" id="Q5R9M9">
    <property type="interactions" value="1186"/>
</dbReference>
<dbReference type="STRING" id="9601.ENSPPYP00000010233"/>
<dbReference type="GlyCosmos" id="Q5R9M9">
    <property type="glycosylation" value="5 sites, No reported glycans"/>
</dbReference>
<dbReference type="GeneID" id="100172832"/>
<dbReference type="KEGG" id="pon:100172832"/>
<dbReference type="CTD" id="25800"/>
<dbReference type="eggNOG" id="KOG2693">
    <property type="taxonomic scope" value="Eukaryota"/>
</dbReference>
<dbReference type="InParanoid" id="Q5R9M9"/>
<dbReference type="OrthoDB" id="200954at2759"/>
<dbReference type="Proteomes" id="UP000001595">
    <property type="component" value="Unplaced"/>
</dbReference>
<dbReference type="GO" id="GO:0016324">
    <property type="term" value="C:apical plasma membrane"/>
    <property type="evidence" value="ECO:0000250"/>
    <property type="project" value="UniProtKB"/>
</dbReference>
<dbReference type="GO" id="GO:0031258">
    <property type="term" value="C:lamellipodium membrane"/>
    <property type="evidence" value="ECO:0000250"/>
    <property type="project" value="UniProtKB"/>
</dbReference>
<dbReference type="GO" id="GO:0045121">
    <property type="term" value="C:membrane raft"/>
    <property type="evidence" value="ECO:0000250"/>
    <property type="project" value="UniProtKB"/>
</dbReference>
<dbReference type="GO" id="GO:0005886">
    <property type="term" value="C:plasma membrane"/>
    <property type="evidence" value="ECO:0000250"/>
    <property type="project" value="UniProtKB"/>
</dbReference>
<dbReference type="GO" id="GO:0140410">
    <property type="term" value="F:monoatomic cation:bicarbonate symporter activity"/>
    <property type="evidence" value="ECO:0007669"/>
    <property type="project" value="TreeGrafter"/>
</dbReference>
<dbReference type="GO" id="GO:0005385">
    <property type="term" value="F:zinc ion transmembrane transporter activity"/>
    <property type="evidence" value="ECO:0000250"/>
    <property type="project" value="UniProtKB"/>
</dbReference>
<dbReference type="GO" id="GO:0001837">
    <property type="term" value="P:epithelial to mesenchymal transition"/>
    <property type="evidence" value="ECO:0000250"/>
    <property type="project" value="UniProtKB"/>
</dbReference>
<dbReference type="GO" id="GO:0030003">
    <property type="term" value="P:intracellular monoatomic cation homeostasis"/>
    <property type="evidence" value="ECO:0007669"/>
    <property type="project" value="TreeGrafter"/>
</dbReference>
<dbReference type="GO" id="GO:0046649">
    <property type="term" value="P:lymphocyte activation"/>
    <property type="evidence" value="ECO:0000250"/>
    <property type="project" value="UniProtKB"/>
</dbReference>
<dbReference type="GO" id="GO:0050852">
    <property type="term" value="P:T cell receptor signaling pathway"/>
    <property type="evidence" value="ECO:0000250"/>
    <property type="project" value="UniProtKB"/>
</dbReference>
<dbReference type="GO" id="GO:0071578">
    <property type="term" value="P:zinc ion import across plasma membrane"/>
    <property type="evidence" value="ECO:0000250"/>
    <property type="project" value="UniProtKB"/>
</dbReference>
<dbReference type="GO" id="GO:0071577">
    <property type="term" value="P:zinc ion transmembrane transport"/>
    <property type="evidence" value="ECO:0000250"/>
    <property type="project" value="UniProtKB"/>
</dbReference>
<dbReference type="InterPro" id="IPR003689">
    <property type="entry name" value="ZIP"/>
</dbReference>
<dbReference type="InterPro" id="IPR050799">
    <property type="entry name" value="ZIP_Transporter"/>
</dbReference>
<dbReference type="PANTHER" id="PTHR12191">
    <property type="entry name" value="SOLUTE CARRIER FAMILY 39"/>
    <property type="match status" value="1"/>
</dbReference>
<dbReference type="PANTHER" id="PTHR12191:SF22">
    <property type="entry name" value="ZINC TRANSPORTER ZIP6"/>
    <property type="match status" value="1"/>
</dbReference>
<dbReference type="Pfam" id="PF02535">
    <property type="entry name" value="Zip"/>
    <property type="match status" value="2"/>
</dbReference>
<protein>
    <recommendedName>
        <fullName evidence="1">Zinc transporter ZIP6</fullName>
    </recommendedName>
    <alternativeName>
        <fullName>Solute carrier family 39 member 6</fullName>
    </alternativeName>
    <alternativeName>
        <fullName>Zrt- and Irt-like protein 6</fullName>
        <shortName>ZIP-6</shortName>
    </alternativeName>
</protein>
<organism>
    <name type="scientific">Pongo abelii</name>
    <name type="common">Sumatran orangutan</name>
    <name type="synonym">Pongo pygmaeus abelii</name>
    <dbReference type="NCBI Taxonomy" id="9601"/>
    <lineage>
        <taxon>Eukaryota</taxon>
        <taxon>Metazoa</taxon>
        <taxon>Chordata</taxon>
        <taxon>Craniata</taxon>
        <taxon>Vertebrata</taxon>
        <taxon>Euteleostomi</taxon>
        <taxon>Mammalia</taxon>
        <taxon>Eutheria</taxon>
        <taxon>Euarchontoglires</taxon>
        <taxon>Primates</taxon>
        <taxon>Haplorrhini</taxon>
        <taxon>Catarrhini</taxon>
        <taxon>Hominidae</taxon>
        <taxon>Pongo</taxon>
    </lineage>
</organism>
<comment type="function">
    <text evidence="1 3">Zinc-influx transporter which plays a role in zinc homeostasis and in the induction of epithelial-to-mesenchymal transition (EMT). When associated with SLC39A10, the heterodimer formed by SLC39A10 and SLC39A6 mediates cellular zinc uptake to trigger cells to undergo epithelial- to-mesenchymal transition (EMT) (By similarity). The SLC39A10-SLC39A6 heterodimer also controls NCAM1 phosphorylation and its integration into focal adhesion complexes during EMT (By similarity). Zinc influx inactivates GSK3B, enabling unphosphorylated SNAI1 in the nucleus to down-regulate adherence genes such as CDH1, causing loss of cell adherence. In addition, the SLC39A10-SLC39A6 heterodimer plays an essentiel role in initiating mitosis by importing zinc into cells to initiate a pathway resulting in the onset of mitosis. Participates in the T-cell receptor signaling regulation by mediating cellular zinc uptake into activated lymphocytes. Regulates the zinc influx necessary for proper meiotic progression to metaphase II (MII) that allows the oocyte-to-egg transition (By similarity).</text>
</comment>
<comment type="catalytic activity">
    <reaction evidence="1">
        <text>Zn(2+)(in) = Zn(2+)(out)</text>
        <dbReference type="Rhea" id="RHEA:29351"/>
        <dbReference type="ChEBI" id="CHEBI:29105"/>
    </reaction>
</comment>
<comment type="subunit">
    <text evidence="1 3">Interacts with SLC39A10; which triggers cells to undergo EMT and mitosis. Found in a complex with SLC39A6, SLC39A10 and with the 'Ser-727' phosphorylated form of STAT3 throughout mitosis (By similarity). Found in a complex with SLC39A6, SLC39A10 and with NCAM1; this complex controls NCAM1 phosphorylation and integration into focal adhesion complexes during epithelial-to-mesenchymal transition (EMT). Found in a complex with SLC39A6, SLC39A10 and with GSK3B that controls NCAM1 phosphorylation (By similarity).</text>
</comment>
<comment type="subcellular location">
    <subcellularLocation>
        <location evidence="1">Cell membrane</location>
        <topology evidence="4">Multi-pass membrane protein</topology>
    </subcellularLocation>
    <subcellularLocation>
        <location evidence="1">Cell projection</location>
        <location evidence="1">Lamellipodium membrane</location>
        <topology evidence="1">Multi-pass membrane protein</topology>
    </subcellularLocation>
    <subcellularLocation>
        <location evidence="1">Membrane raft</location>
        <topology evidence="4">Multi-pass membrane protein</topology>
    </subcellularLocation>
    <subcellularLocation>
        <location evidence="2">Apical cell membrane</location>
    </subcellularLocation>
    <text evidence="1 2">Localizes to lipid rafts in T cells and is recruited into the immunological synapse in response to TCR stimulation (By similarity). In the choroid plexus is limited to the apical membrane in epithelial cells (By similarity).</text>
</comment>
<comment type="PTM">
    <text evidence="1">Cleaved on the N-terminus before locating to the plasma membrane.</text>
</comment>
<comment type="PTM">
    <text evidence="1">N-glycosylated.</text>
</comment>
<comment type="PTM">
    <text evidence="1">Phosphorylated by ZAP70 in response to TCR stimulation leading to its activation.</text>
</comment>
<comment type="similarity">
    <text evidence="6">Belongs to the ZIP transporter (TC 2.A.5) family.</text>
</comment>